<name>DNAK_BURM7</name>
<organism>
    <name type="scientific">Burkholderia mallei (strain NCTC 10247)</name>
    <dbReference type="NCBI Taxonomy" id="320389"/>
    <lineage>
        <taxon>Bacteria</taxon>
        <taxon>Pseudomonadati</taxon>
        <taxon>Pseudomonadota</taxon>
        <taxon>Betaproteobacteria</taxon>
        <taxon>Burkholderiales</taxon>
        <taxon>Burkholderiaceae</taxon>
        <taxon>Burkholderia</taxon>
        <taxon>pseudomallei group</taxon>
    </lineage>
</organism>
<protein>
    <recommendedName>
        <fullName evidence="1">Chaperone protein DnaK</fullName>
    </recommendedName>
    <alternativeName>
        <fullName evidence="1">HSP70</fullName>
    </alternativeName>
    <alternativeName>
        <fullName evidence="1">Heat shock 70 kDa protein</fullName>
    </alternativeName>
    <alternativeName>
        <fullName evidence="1">Heat shock protein 70</fullName>
    </alternativeName>
</protein>
<reference key="1">
    <citation type="journal article" date="2010" name="Genome Biol. Evol.">
        <title>Continuing evolution of Burkholderia mallei through genome reduction and large-scale rearrangements.</title>
        <authorList>
            <person name="Losada L."/>
            <person name="Ronning C.M."/>
            <person name="DeShazer D."/>
            <person name="Woods D."/>
            <person name="Fedorova N."/>
            <person name="Kim H.S."/>
            <person name="Shabalina S.A."/>
            <person name="Pearson T.R."/>
            <person name="Brinkac L."/>
            <person name="Tan P."/>
            <person name="Nandi T."/>
            <person name="Crabtree J."/>
            <person name="Badger J."/>
            <person name="Beckstrom-Sternberg S."/>
            <person name="Saqib M."/>
            <person name="Schutzer S.E."/>
            <person name="Keim P."/>
            <person name="Nierman W.C."/>
        </authorList>
    </citation>
    <scope>NUCLEOTIDE SEQUENCE [LARGE SCALE GENOMIC DNA]</scope>
    <source>
        <strain>NCTC 10247</strain>
    </source>
</reference>
<feature type="chain" id="PRO_1000059520" description="Chaperone protein DnaK">
    <location>
        <begin position="1"/>
        <end position="650"/>
    </location>
</feature>
<feature type="region of interest" description="Disordered" evidence="2">
    <location>
        <begin position="611"/>
        <end position="650"/>
    </location>
</feature>
<feature type="compositionally biased region" description="Low complexity" evidence="2">
    <location>
        <begin position="611"/>
        <end position="636"/>
    </location>
</feature>
<feature type="modified residue" description="Phosphothreonine; by autocatalysis" evidence="1">
    <location>
        <position position="200"/>
    </location>
</feature>
<proteinExistence type="inferred from homology"/>
<sequence length="650" mass="69702">MGKIIGIDLGTTNSCVAIMEGNQVKVIENSEGARTTPSIIAYMDDNEVLVGAPAKRQSVTNPKNTLFAVKRLIGRRFEEKEVQKDIGLMPYAIIKADNGDAWVEAHGEKLAPPQVSAEVLRKMKKTAEDYLGEPVTEAVITVPAYFNDSQRQATKDAGRIAGLEVKRIINEPTAAALAFGLDKAEKGDRKIAVYDLGGGTFDVSIIEIADVDGEMQFEVLSTNGDTFLGGEDFDQRIIDYIIGEFKKEQGVDLSKDVLALQRLKEAAEKAKIELSSSQQTEINLPYITADASGPKHLNLKVTRAKLEALVEDLVERTIEPCRTAIKDAGVKVSDIDDVILVGGQTRMPKVQEKVKEFFGKEPRRDVNPDEAVAVGAAIQGQVLSGDRKDVLLLDVTPLSLGIETLGGVMTKMINKNTTIPTKHAQVYSTADDNQGAVTIKVFQGEREMAAGNKLLGEFNLEGIPPAPRGVPQIEVTFDIDANGILHVGAKDKATGKENKITIKANSGLSEAEIEKMVKDAEANAAEDHKLRELAESRNQGDALVHSTKKALTEYGDKLEAGEKEKIEAALKELEDVLKNASSDKAAIDAKVEAVATASQKLGEKMYADMQAQQAGAAGAAGAAAEGASAQGGAQPADDVVDADFKEVKKD</sequence>
<accession>A3MN99</accession>
<evidence type="ECO:0000255" key="1">
    <source>
        <dbReference type="HAMAP-Rule" id="MF_00332"/>
    </source>
</evidence>
<evidence type="ECO:0000256" key="2">
    <source>
        <dbReference type="SAM" id="MobiDB-lite"/>
    </source>
</evidence>
<gene>
    <name evidence="1" type="primary">dnaK</name>
    <name type="ordered locus">BMA10247_2206</name>
</gene>
<comment type="function">
    <text evidence="1">Acts as a chaperone.</text>
</comment>
<comment type="induction">
    <text evidence="1">By stress conditions e.g. heat shock.</text>
</comment>
<comment type="similarity">
    <text evidence="1">Belongs to the heat shock protein 70 family.</text>
</comment>
<dbReference type="EMBL" id="CP000548">
    <property type="protein sequence ID" value="ABO05674.1"/>
    <property type="molecule type" value="Genomic_DNA"/>
</dbReference>
<dbReference type="RefSeq" id="WP_004194034.1">
    <property type="nucleotide sequence ID" value="NZ_CP007802.1"/>
</dbReference>
<dbReference type="SMR" id="A3MN99"/>
<dbReference type="GeneID" id="92980018"/>
<dbReference type="KEGG" id="bmaz:BM44_1036"/>
<dbReference type="KEGG" id="bmn:BMA10247_2206"/>
<dbReference type="PATRIC" id="fig|320389.8.peg.1157"/>
<dbReference type="GO" id="GO:0005524">
    <property type="term" value="F:ATP binding"/>
    <property type="evidence" value="ECO:0007669"/>
    <property type="project" value="UniProtKB-UniRule"/>
</dbReference>
<dbReference type="GO" id="GO:0140662">
    <property type="term" value="F:ATP-dependent protein folding chaperone"/>
    <property type="evidence" value="ECO:0007669"/>
    <property type="project" value="InterPro"/>
</dbReference>
<dbReference type="GO" id="GO:0051082">
    <property type="term" value="F:unfolded protein binding"/>
    <property type="evidence" value="ECO:0007669"/>
    <property type="project" value="InterPro"/>
</dbReference>
<dbReference type="CDD" id="cd10234">
    <property type="entry name" value="ASKHA_NBD_HSP70_DnaK-like"/>
    <property type="match status" value="1"/>
</dbReference>
<dbReference type="FunFam" id="2.60.34.10:FF:000014">
    <property type="entry name" value="Chaperone protein DnaK HSP70"/>
    <property type="match status" value="1"/>
</dbReference>
<dbReference type="FunFam" id="1.20.1270.10:FF:000001">
    <property type="entry name" value="Molecular chaperone DnaK"/>
    <property type="match status" value="1"/>
</dbReference>
<dbReference type="FunFam" id="3.30.420.40:FF:000004">
    <property type="entry name" value="Molecular chaperone DnaK"/>
    <property type="match status" value="1"/>
</dbReference>
<dbReference type="FunFam" id="3.90.640.10:FF:000003">
    <property type="entry name" value="Molecular chaperone DnaK"/>
    <property type="match status" value="1"/>
</dbReference>
<dbReference type="Gene3D" id="1.20.1270.10">
    <property type="match status" value="1"/>
</dbReference>
<dbReference type="Gene3D" id="3.30.420.40">
    <property type="match status" value="2"/>
</dbReference>
<dbReference type="Gene3D" id="3.90.640.10">
    <property type="entry name" value="Actin, Chain A, domain 4"/>
    <property type="match status" value="1"/>
</dbReference>
<dbReference type="Gene3D" id="2.60.34.10">
    <property type="entry name" value="Substrate Binding Domain Of DNAk, Chain A, domain 1"/>
    <property type="match status" value="1"/>
</dbReference>
<dbReference type="HAMAP" id="MF_00332">
    <property type="entry name" value="DnaK"/>
    <property type="match status" value="1"/>
</dbReference>
<dbReference type="InterPro" id="IPR043129">
    <property type="entry name" value="ATPase_NBD"/>
</dbReference>
<dbReference type="InterPro" id="IPR012725">
    <property type="entry name" value="Chaperone_DnaK"/>
</dbReference>
<dbReference type="InterPro" id="IPR018181">
    <property type="entry name" value="Heat_shock_70_CS"/>
</dbReference>
<dbReference type="InterPro" id="IPR029048">
    <property type="entry name" value="HSP70_C_sf"/>
</dbReference>
<dbReference type="InterPro" id="IPR029047">
    <property type="entry name" value="HSP70_peptide-bd_sf"/>
</dbReference>
<dbReference type="InterPro" id="IPR013126">
    <property type="entry name" value="Hsp_70_fam"/>
</dbReference>
<dbReference type="NCBIfam" id="NF001413">
    <property type="entry name" value="PRK00290.1"/>
    <property type="match status" value="1"/>
</dbReference>
<dbReference type="NCBIfam" id="NF003520">
    <property type="entry name" value="PRK05183.1"/>
    <property type="match status" value="1"/>
</dbReference>
<dbReference type="NCBIfam" id="TIGR02350">
    <property type="entry name" value="prok_dnaK"/>
    <property type="match status" value="1"/>
</dbReference>
<dbReference type="PANTHER" id="PTHR19375">
    <property type="entry name" value="HEAT SHOCK PROTEIN 70KDA"/>
    <property type="match status" value="1"/>
</dbReference>
<dbReference type="Pfam" id="PF00012">
    <property type="entry name" value="HSP70"/>
    <property type="match status" value="1"/>
</dbReference>
<dbReference type="PRINTS" id="PR00301">
    <property type="entry name" value="HEATSHOCK70"/>
</dbReference>
<dbReference type="SUPFAM" id="SSF53067">
    <property type="entry name" value="Actin-like ATPase domain"/>
    <property type="match status" value="2"/>
</dbReference>
<dbReference type="SUPFAM" id="SSF100934">
    <property type="entry name" value="Heat shock protein 70kD (HSP70), C-terminal subdomain"/>
    <property type="match status" value="1"/>
</dbReference>
<dbReference type="SUPFAM" id="SSF100920">
    <property type="entry name" value="Heat shock protein 70kD (HSP70), peptide-binding domain"/>
    <property type="match status" value="1"/>
</dbReference>
<dbReference type="PROSITE" id="PS00297">
    <property type="entry name" value="HSP70_1"/>
    <property type="match status" value="1"/>
</dbReference>
<dbReference type="PROSITE" id="PS00329">
    <property type="entry name" value="HSP70_2"/>
    <property type="match status" value="1"/>
</dbReference>
<dbReference type="PROSITE" id="PS01036">
    <property type="entry name" value="HSP70_3"/>
    <property type="match status" value="1"/>
</dbReference>
<keyword id="KW-0067">ATP-binding</keyword>
<keyword id="KW-0143">Chaperone</keyword>
<keyword id="KW-0547">Nucleotide-binding</keyword>
<keyword id="KW-0597">Phosphoprotein</keyword>
<keyword id="KW-0346">Stress response</keyword>